<sequence>MQLNDFDYYLPTELIAQQPAQNRDASRLMTLDRVNGELNETIISEIAALFRDGDLLVINDTRVIPARLLGKKESGGRVEVFLVRRLLEPGEVWQCLIKASKSPKPGSLIILSEGVVARVLERSELDTWAVSFSPVEGFLDRLERIGSMPLPPYIRRSAGDDDRERYQTVFARAKGAVAAPTAGLHFTDALLQKIRQQGVEIAPLTLHVGLGTFMPVRVDDLKDHRMHREYYFIPEATARAVNARKNDGGRVVALGTTTTRALEHAAAGNGSVQPGEGEADIFICPGYTFKVVDALITNFHLPKSTLLMLVSALAGKDRLFNAYNEAVNRNFRFFSYGDAMFIY</sequence>
<accession>A5GEQ5</accession>
<proteinExistence type="inferred from homology"/>
<dbReference type="EC" id="2.4.99.17" evidence="1"/>
<dbReference type="EMBL" id="CP000698">
    <property type="protein sequence ID" value="ABQ25910.1"/>
    <property type="molecule type" value="Genomic_DNA"/>
</dbReference>
<dbReference type="RefSeq" id="WP_011938616.1">
    <property type="nucleotide sequence ID" value="NC_009483.1"/>
</dbReference>
<dbReference type="SMR" id="A5GEQ5"/>
<dbReference type="STRING" id="351605.Gura_1715"/>
<dbReference type="KEGG" id="gur:Gura_1715"/>
<dbReference type="HOGENOM" id="CLU_039110_1_0_7"/>
<dbReference type="OrthoDB" id="9805933at2"/>
<dbReference type="UniPathway" id="UPA00392"/>
<dbReference type="Proteomes" id="UP000006695">
    <property type="component" value="Chromosome"/>
</dbReference>
<dbReference type="GO" id="GO:0005737">
    <property type="term" value="C:cytoplasm"/>
    <property type="evidence" value="ECO:0007669"/>
    <property type="project" value="UniProtKB-SubCell"/>
</dbReference>
<dbReference type="GO" id="GO:0051075">
    <property type="term" value="F:S-adenosylmethionine:tRNA ribosyltransferase-isomerase activity"/>
    <property type="evidence" value="ECO:0007669"/>
    <property type="project" value="UniProtKB-EC"/>
</dbReference>
<dbReference type="GO" id="GO:0008616">
    <property type="term" value="P:queuosine biosynthetic process"/>
    <property type="evidence" value="ECO:0007669"/>
    <property type="project" value="UniProtKB-UniRule"/>
</dbReference>
<dbReference type="GO" id="GO:0002099">
    <property type="term" value="P:tRNA wobble guanine modification"/>
    <property type="evidence" value="ECO:0007669"/>
    <property type="project" value="TreeGrafter"/>
</dbReference>
<dbReference type="FunFam" id="3.40.1780.10:FF:000001">
    <property type="entry name" value="S-adenosylmethionine:tRNA ribosyltransferase-isomerase"/>
    <property type="match status" value="1"/>
</dbReference>
<dbReference type="Gene3D" id="2.40.10.240">
    <property type="entry name" value="QueA-like"/>
    <property type="match status" value="1"/>
</dbReference>
<dbReference type="Gene3D" id="3.40.1780.10">
    <property type="entry name" value="QueA-like"/>
    <property type="match status" value="1"/>
</dbReference>
<dbReference type="HAMAP" id="MF_00113">
    <property type="entry name" value="QueA"/>
    <property type="match status" value="1"/>
</dbReference>
<dbReference type="InterPro" id="IPR003699">
    <property type="entry name" value="QueA"/>
</dbReference>
<dbReference type="InterPro" id="IPR042118">
    <property type="entry name" value="QueA_dom1"/>
</dbReference>
<dbReference type="InterPro" id="IPR042119">
    <property type="entry name" value="QueA_dom2"/>
</dbReference>
<dbReference type="InterPro" id="IPR036100">
    <property type="entry name" value="QueA_sf"/>
</dbReference>
<dbReference type="NCBIfam" id="NF001140">
    <property type="entry name" value="PRK00147.1"/>
    <property type="match status" value="1"/>
</dbReference>
<dbReference type="NCBIfam" id="TIGR00113">
    <property type="entry name" value="queA"/>
    <property type="match status" value="1"/>
</dbReference>
<dbReference type="PANTHER" id="PTHR30307">
    <property type="entry name" value="S-ADENOSYLMETHIONINE:TRNA RIBOSYLTRANSFERASE-ISOMERASE"/>
    <property type="match status" value="1"/>
</dbReference>
<dbReference type="PANTHER" id="PTHR30307:SF0">
    <property type="entry name" value="S-ADENOSYLMETHIONINE:TRNA RIBOSYLTRANSFERASE-ISOMERASE"/>
    <property type="match status" value="1"/>
</dbReference>
<dbReference type="Pfam" id="PF02547">
    <property type="entry name" value="Queuosine_synth"/>
    <property type="match status" value="1"/>
</dbReference>
<dbReference type="SUPFAM" id="SSF111337">
    <property type="entry name" value="QueA-like"/>
    <property type="match status" value="1"/>
</dbReference>
<gene>
    <name evidence="1" type="primary">queA</name>
    <name type="ordered locus">Gura_1715</name>
</gene>
<organism>
    <name type="scientific">Geotalea uraniireducens (strain Rf4)</name>
    <name type="common">Geobacter uraniireducens</name>
    <dbReference type="NCBI Taxonomy" id="351605"/>
    <lineage>
        <taxon>Bacteria</taxon>
        <taxon>Pseudomonadati</taxon>
        <taxon>Thermodesulfobacteriota</taxon>
        <taxon>Desulfuromonadia</taxon>
        <taxon>Geobacterales</taxon>
        <taxon>Geobacteraceae</taxon>
        <taxon>Geotalea</taxon>
    </lineage>
</organism>
<feature type="chain" id="PRO_1000076006" description="S-adenosylmethionine:tRNA ribosyltransferase-isomerase">
    <location>
        <begin position="1"/>
        <end position="343"/>
    </location>
</feature>
<protein>
    <recommendedName>
        <fullName evidence="1">S-adenosylmethionine:tRNA ribosyltransferase-isomerase</fullName>
        <ecNumber evidence="1">2.4.99.17</ecNumber>
    </recommendedName>
    <alternativeName>
        <fullName evidence="1">Queuosine biosynthesis protein QueA</fullName>
    </alternativeName>
</protein>
<reference key="1">
    <citation type="submission" date="2007-05" db="EMBL/GenBank/DDBJ databases">
        <title>Complete sequence of Geobacter uraniireducens Rf4.</title>
        <authorList>
            <consortium name="US DOE Joint Genome Institute"/>
            <person name="Copeland A."/>
            <person name="Lucas S."/>
            <person name="Lapidus A."/>
            <person name="Barry K."/>
            <person name="Detter J.C."/>
            <person name="Glavina del Rio T."/>
            <person name="Hammon N."/>
            <person name="Israni S."/>
            <person name="Dalin E."/>
            <person name="Tice H."/>
            <person name="Pitluck S."/>
            <person name="Chertkov O."/>
            <person name="Brettin T."/>
            <person name="Bruce D."/>
            <person name="Han C."/>
            <person name="Schmutz J."/>
            <person name="Larimer F."/>
            <person name="Land M."/>
            <person name="Hauser L."/>
            <person name="Kyrpides N."/>
            <person name="Mikhailova N."/>
            <person name="Shelobolina E."/>
            <person name="Aklujkar M."/>
            <person name="Lovley D."/>
            <person name="Richardson P."/>
        </authorList>
    </citation>
    <scope>NUCLEOTIDE SEQUENCE [LARGE SCALE GENOMIC DNA]</scope>
    <source>
        <strain>ATCC BAA-1134 / JCM 13001 / Rf4</strain>
    </source>
</reference>
<keyword id="KW-0963">Cytoplasm</keyword>
<keyword id="KW-0671">Queuosine biosynthesis</keyword>
<keyword id="KW-1185">Reference proteome</keyword>
<keyword id="KW-0949">S-adenosyl-L-methionine</keyword>
<keyword id="KW-0808">Transferase</keyword>
<name>QUEA_GEOUR</name>
<evidence type="ECO:0000255" key="1">
    <source>
        <dbReference type="HAMAP-Rule" id="MF_00113"/>
    </source>
</evidence>
<comment type="function">
    <text evidence="1">Transfers and isomerizes the ribose moiety from AdoMet to the 7-aminomethyl group of 7-deazaguanine (preQ1-tRNA) to give epoxyqueuosine (oQ-tRNA).</text>
</comment>
<comment type="catalytic activity">
    <reaction evidence="1">
        <text>7-aminomethyl-7-carbaguanosine(34) in tRNA + S-adenosyl-L-methionine = epoxyqueuosine(34) in tRNA + adenine + L-methionine + 2 H(+)</text>
        <dbReference type="Rhea" id="RHEA:32155"/>
        <dbReference type="Rhea" id="RHEA-COMP:10342"/>
        <dbReference type="Rhea" id="RHEA-COMP:18582"/>
        <dbReference type="ChEBI" id="CHEBI:15378"/>
        <dbReference type="ChEBI" id="CHEBI:16708"/>
        <dbReference type="ChEBI" id="CHEBI:57844"/>
        <dbReference type="ChEBI" id="CHEBI:59789"/>
        <dbReference type="ChEBI" id="CHEBI:82833"/>
        <dbReference type="ChEBI" id="CHEBI:194443"/>
        <dbReference type="EC" id="2.4.99.17"/>
    </reaction>
</comment>
<comment type="pathway">
    <text evidence="1">tRNA modification; tRNA-queuosine biosynthesis.</text>
</comment>
<comment type="subunit">
    <text evidence="1">Monomer.</text>
</comment>
<comment type="subcellular location">
    <subcellularLocation>
        <location evidence="1">Cytoplasm</location>
    </subcellularLocation>
</comment>
<comment type="similarity">
    <text evidence="1">Belongs to the QueA family.</text>
</comment>